<proteinExistence type="inferred from homology"/>
<organism>
    <name type="scientific">Acinetobacter baumannii (strain AB307-0294)</name>
    <dbReference type="NCBI Taxonomy" id="557600"/>
    <lineage>
        <taxon>Bacteria</taxon>
        <taxon>Pseudomonadati</taxon>
        <taxon>Pseudomonadota</taxon>
        <taxon>Gammaproteobacteria</taxon>
        <taxon>Moraxellales</taxon>
        <taxon>Moraxellaceae</taxon>
        <taxon>Acinetobacter</taxon>
        <taxon>Acinetobacter calcoaceticus/baumannii complex</taxon>
    </lineage>
</organism>
<accession>B7H0P7</accession>
<sequence>MQQALFGGGCFWCVEAVFLQIRGVEKVTSGYAGGHTTHPTYEQVCQGDTQHAEVVLIDFDEQQVTYSQLLDVFFATHDPTTLNRQGNDIGTQYRSVIYYFNEEQKQAAEHTIQTLKDDDLDIVTELSPAPTFYPAEDYHQNYYEKNPSQGYCNFAIPPKLLKLHSKFQHLMKN</sequence>
<comment type="function">
    <text evidence="1">Has an important function as a repair enzyme for proteins that have been inactivated by oxidation. Catalyzes the reversible oxidation-reduction of methionine sulfoxide in proteins to methionine.</text>
</comment>
<comment type="catalytic activity">
    <reaction evidence="1">
        <text>L-methionyl-[protein] + [thioredoxin]-disulfide + H2O = L-methionyl-(S)-S-oxide-[protein] + [thioredoxin]-dithiol</text>
        <dbReference type="Rhea" id="RHEA:14217"/>
        <dbReference type="Rhea" id="RHEA-COMP:10698"/>
        <dbReference type="Rhea" id="RHEA-COMP:10700"/>
        <dbReference type="Rhea" id="RHEA-COMP:12313"/>
        <dbReference type="Rhea" id="RHEA-COMP:12315"/>
        <dbReference type="ChEBI" id="CHEBI:15377"/>
        <dbReference type="ChEBI" id="CHEBI:16044"/>
        <dbReference type="ChEBI" id="CHEBI:29950"/>
        <dbReference type="ChEBI" id="CHEBI:44120"/>
        <dbReference type="ChEBI" id="CHEBI:50058"/>
        <dbReference type="EC" id="1.8.4.11"/>
    </reaction>
</comment>
<comment type="catalytic activity">
    <reaction evidence="1">
        <text>[thioredoxin]-disulfide + L-methionine + H2O = L-methionine (S)-S-oxide + [thioredoxin]-dithiol</text>
        <dbReference type="Rhea" id="RHEA:19993"/>
        <dbReference type="Rhea" id="RHEA-COMP:10698"/>
        <dbReference type="Rhea" id="RHEA-COMP:10700"/>
        <dbReference type="ChEBI" id="CHEBI:15377"/>
        <dbReference type="ChEBI" id="CHEBI:29950"/>
        <dbReference type="ChEBI" id="CHEBI:50058"/>
        <dbReference type="ChEBI" id="CHEBI:57844"/>
        <dbReference type="ChEBI" id="CHEBI:58772"/>
        <dbReference type="EC" id="1.8.4.11"/>
    </reaction>
</comment>
<comment type="similarity">
    <text evidence="1">Belongs to the MsrA Met sulfoxide reductase family.</text>
</comment>
<feature type="chain" id="PRO_1000145388" description="Peptide methionine sulfoxide reductase MsrA">
    <location>
        <begin position="1"/>
        <end position="173"/>
    </location>
</feature>
<feature type="active site" evidence="1">
    <location>
        <position position="10"/>
    </location>
</feature>
<name>MSRA_ACIB3</name>
<dbReference type="EC" id="1.8.4.11" evidence="1"/>
<dbReference type="EMBL" id="CP001172">
    <property type="protein sequence ID" value="ACJ57069.1"/>
    <property type="molecule type" value="Genomic_DNA"/>
</dbReference>
<dbReference type="RefSeq" id="WP_001183413.1">
    <property type="nucleotide sequence ID" value="NZ_CP001172.1"/>
</dbReference>
<dbReference type="SMR" id="B7H0P7"/>
<dbReference type="GeneID" id="92892449"/>
<dbReference type="HOGENOM" id="CLU_031040_10_0_6"/>
<dbReference type="Proteomes" id="UP000006924">
    <property type="component" value="Chromosome"/>
</dbReference>
<dbReference type="GO" id="GO:0033744">
    <property type="term" value="F:L-methionine:thioredoxin-disulfide S-oxidoreductase activity"/>
    <property type="evidence" value="ECO:0007669"/>
    <property type="project" value="RHEA"/>
</dbReference>
<dbReference type="GO" id="GO:0008113">
    <property type="term" value="F:peptide-methionine (S)-S-oxide reductase activity"/>
    <property type="evidence" value="ECO:0007669"/>
    <property type="project" value="UniProtKB-UniRule"/>
</dbReference>
<dbReference type="GO" id="GO:0036211">
    <property type="term" value="P:protein modification process"/>
    <property type="evidence" value="ECO:0007669"/>
    <property type="project" value="UniProtKB-UniRule"/>
</dbReference>
<dbReference type="Gene3D" id="3.30.1060.10">
    <property type="entry name" value="Peptide methionine sulphoxide reductase MsrA"/>
    <property type="match status" value="1"/>
</dbReference>
<dbReference type="HAMAP" id="MF_01401">
    <property type="entry name" value="MsrA"/>
    <property type="match status" value="1"/>
</dbReference>
<dbReference type="InterPro" id="IPR002569">
    <property type="entry name" value="Met_Sox_Rdtase_MsrA_dom"/>
</dbReference>
<dbReference type="InterPro" id="IPR036509">
    <property type="entry name" value="Met_Sox_Rdtase_MsrA_sf"/>
</dbReference>
<dbReference type="NCBIfam" id="TIGR00401">
    <property type="entry name" value="msrA"/>
    <property type="match status" value="1"/>
</dbReference>
<dbReference type="PANTHER" id="PTHR43774">
    <property type="entry name" value="PEPTIDE METHIONINE SULFOXIDE REDUCTASE"/>
    <property type="match status" value="1"/>
</dbReference>
<dbReference type="PANTHER" id="PTHR43774:SF1">
    <property type="entry name" value="PEPTIDE METHIONINE SULFOXIDE REDUCTASE MSRA 2"/>
    <property type="match status" value="1"/>
</dbReference>
<dbReference type="Pfam" id="PF01625">
    <property type="entry name" value="PMSR"/>
    <property type="match status" value="1"/>
</dbReference>
<dbReference type="SUPFAM" id="SSF55068">
    <property type="entry name" value="Peptide methionine sulfoxide reductase"/>
    <property type="match status" value="1"/>
</dbReference>
<protein>
    <recommendedName>
        <fullName evidence="1">Peptide methionine sulfoxide reductase MsrA</fullName>
        <shortName evidence="1">Protein-methionine-S-oxide reductase</shortName>
        <ecNumber evidence="1">1.8.4.11</ecNumber>
    </recommendedName>
    <alternativeName>
        <fullName evidence="1">Peptide-methionine (S)-S-oxide reductase</fullName>
        <shortName evidence="1">Peptide Met(O) reductase</shortName>
    </alternativeName>
</protein>
<evidence type="ECO:0000255" key="1">
    <source>
        <dbReference type="HAMAP-Rule" id="MF_01401"/>
    </source>
</evidence>
<keyword id="KW-0560">Oxidoreductase</keyword>
<reference key="1">
    <citation type="journal article" date="2008" name="J. Bacteriol.">
        <title>Comparative genome sequence analysis of multidrug-resistant Acinetobacter baumannii.</title>
        <authorList>
            <person name="Adams M.D."/>
            <person name="Goglin K."/>
            <person name="Molyneaux N."/>
            <person name="Hujer K.M."/>
            <person name="Lavender H."/>
            <person name="Jamison J.J."/>
            <person name="MacDonald I.J."/>
            <person name="Martin K.M."/>
            <person name="Russo T."/>
            <person name="Campagnari A.A."/>
            <person name="Hujer A.M."/>
            <person name="Bonomo R.A."/>
            <person name="Gill S.R."/>
        </authorList>
    </citation>
    <scope>NUCLEOTIDE SEQUENCE [LARGE SCALE GENOMIC DNA]</scope>
    <source>
        <strain>AB307-0294</strain>
    </source>
</reference>
<gene>
    <name evidence="1" type="primary">msrA</name>
    <name type="ordered locus">ABBFA_003079</name>
</gene>